<protein>
    <recommendedName>
        <fullName>Fibroblast growth factor 11</fullName>
        <shortName>FGF-11</shortName>
    </recommendedName>
    <alternativeName>
        <fullName>Fibroblast growth factor homologous factor 3</fullName>
        <shortName>FHF-3</shortName>
    </alternativeName>
</protein>
<gene>
    <name type="primary">Fgf11</name>
    <name type="synonym">Fhf3</name>
</gene>
<comment type="function">
    <text>Probably involved in nervous system development and function.</text>
</comment>
<comment type="subcellular location">
    <subcellularLocation>
        <location evidence="2">Nucleus</location>
    </subcellularLocation>
</comment>
<comment type="tissue specificity">
    <text>Brain and eye, and in a segmental pattern of the embryonic body wall. In adult olfactory bulb, hippocampus and most concentrated in Purkinje cell layer of the cerebellum.</text>
</comment>
<comment type="similarity">
    <text evidence="2">Belongs to the heparin-binding growth factors family.</text>
</comment>
<proteinExistence type="evidence at transcript level"/>
<dbReference type="EMBL" id="U66203">
    <property type="protein sequence ID" value="AAB18919.1"/>
    <property type="molecule type" value="mRNA"/>
</dbReference>
<dbReference type="EMBL" id="AL603707">
    <property type="status" value="NOT_ANNOTATED_CDS"/>
    <property type="molecule type" value="Genomic_DNA"/>
</dbReference>
<dbReference type="CCDS" id="CCDS24911.1"/>
<dbReference type="RefSeq" id="NP_001278033.1">
    <property type="nucleotide sequence ID" value="NM_001291104.1"/>
</dbReference>
<dbReference type="RefSeq" id="NP_001349552.1">
    <property type="nucleotide sequence ID" value="NM_001362623.1"/>
</dbReference>
<dbReference type="RefSeq" id="NP_034328.1">
    <property type="nucleotide sequence ID" value="NM_010198.3"/>
</dbReference>
<dbReference type="RefSeq" id="XP_011247026.1">
    <property type="nucleotide sequence ID" value="XM_011248724.2"/>
</dbReference>
<dbReference type="SMR" id="P70378"/>
<dbReference type="FunCoup" id="P70378">
    <property type="interactions" value="455"/>
</dbReference>
<dbReference type="STRING" id="10090.ENSMUSP00000099645"/>
<dbReference type="iPTMnet" id="P70378"/>
<dbReference type="PhosphoSitePlus" id="P70378"/>
<dbReference type="PaxDb" id="10090-ENSMUSP00000099645"/>
<dbReference type="PeptideAtlas" id="P70378"/>
<dbReference type="Antibodypedia" id="58774">
    <property type="antibodies" value="216 antibodies from 27 providers"/>
</dbReference>
<dbReference type="DNASU" id="14166"/>
<dbReference type="Ensembl" id="ENSMUST00000102585.2">
    <property type="protein sequence ID" value="ENSMUSP00000099645.2"/>
    <property type="gene ID" value="ENSMUSG00000042826.14"/>
</dbReference>
<dbReference type="GeneID" id="14166"/>
<dbReference type="KEGG" id="mmu:14166"/>
<dbReference type="UCSC" id="uc007jrr.2">
    <property type="organism name" value="mouse"/>
</dbReference>
<dbReference type="AGR" id="MGI:109167"/>
<dbReference type="CTD" id="2256"/>
<dbReference type="MGI" id="MGI:109167">
    <property type="gene designation" value="Fgf11"/>
</dbReference>
<dbReference type="VEuPathDB" id="HostDB:ENSMUSG00000042826"/>
<dbReference type="eggNOG" id="KOG3885">
    <property type="taxonomic scope" value="Eukaryota"/>
</dbReference>
<dbReference type="GeneTree" id="ENSGT00940000158058"/>
<dbReference type="HOGENOM" id="CLU_081609_2_0_1"/>
<dbReference type="InParanoid" id="P70378"/>
<dbReference type="OMA" id="LYCSPHF"/>
<dbReference type="OrthoDB" id="6158176at2759"/>
<dbReference type="PhylomeDB" id="P70378"/>
<dbReference type="TreeFam" id="TF317805"/>
<dbReference type="BioGRID-ORCS" id="14166">
    <property type="hits" value="2 hits in 79 CRISPR screens"/>
</dbReference>
<dbReference type="PRO" id="PR:P70378"/>
<dbReference type="Proteomes" id="UP000000589">
    <property type="component" value="Chromosome 11"/>
</dbReference>
<dbReference type="RNAct" id="P70378">
    <property type="molecule type" value="protein"/>
</dbReference>
<dbReference type="Bgee" id="ENSMUSG00000042826">
    <property type="expression patterns" value="Expressed in retinal neural layer and 84 other cell types or tissues"/>
</dbReference>
<dbReference type="ExpressionAtlas" id="P70378">
    <property type="expression patterns" value="baseline and differential"/>
</dbReference>
<dbReference type="GO" id="GO:0005634">
    <property type="term" value="C:nucleus"/>
    <property type="evidence" value="ECO:0007669"/>
    <property type="project" value="UniProtKB-SubCell"/>
</dbReference>
<dbReference type="GO" id="GO:0008083">
    <property type="term" value="F:growth factor activity"/>
    <property type="evidence" value="ECO:0007669"/>
    <property type="project" value="UniProtKB-KW"/>
</dbReference>
<dbReference type="CDD" id="cd23309">
    <property type="entry name" value="beta-trefoil_FGF11-like"/>
    <property type="match status" value="1"/>
</dbReference>
<dbReference type="FunFam" id="2.80.10.50:FF:000001">
    <property type="entry name" value="Fibroblast growth factor"/>
    <property type="match status" value="1"/>
</dbReference>
<dbReference type="Gene3D" id="2.80.10.50">
    <property type="match status" value="1"/>
</dbReference>
<dbReference type="InterPro" id="IPR002209">
    <property type="entry name" value="Fibroblast_GF_fam"/>
</dbReference>
<dbReference type="InterPro" id="IPR008996">
    <property type="entry name" value="IL1/FGF"/>
</dbReference>
<dbReference type="PANTHER" id="PTHR11486">
    <property type="entry name" value="FIBROBLAST GROWTH FACTOR"/>
    <property type="match status" value="1"/>
</dbReference>
<dbReference type="Pfam" id="PF00167">
    <property type="entry name" value="FGF"/>
    <property type="match status" value="1"/>
</dbReference>
<dbReference type="PRINTS" id="PR00263">
    <property type="entry name" value="HBGFFGF"/>
</dbReference>
<dbReference type="PRINTS" id="PR00262">
    <property type="entry name" value="IL1HBGF"/>
</dbReference>
<dbReference type="SMART" id="SM00442">
    <property type="entry name" value="FGF"/>
    <property type="match status" value="1"/>
</dbReference>
<dbReference type="SUPFAM" id="SSF50353">
    <property type="entry name" value="Cytokine"/>
    <property type="match status" value="1"/>
</dbReference>
<dbReference type="PROSITE" id="PS00247">
    <property type="entry name" value="HBGF_FGF"/>
    <property type="match status" value="1"/>
</dbReference>
<feature type="chain" id="PRO_0000147603" description="Fibroblast growth factor 11">
    <location>
        <begin position="1"/>
        <end position="225"/>
    </location>
</feature>
<feature type="region of interest" description="Disordered" evidence="1">
    <location>
        <begin position="1"/>
        <end position="28"/>
    </location>
</feature>
<sequence>MAALASSLIRQKREVREPGGSRPVSAQRRVCPRGTKSLCQKQLLILLSKVRLCGGRPTRQDRGPEPQLKGIVTKLFCRQGFYLQANPDGSIQGTPEDTSSFTHFNLIPVGLRVVTIQSAKLGHYMAMNAEGLLYSSPHFTAECRFKECVFENYYVLYASALYRQRRSGRAWYLGLDKEGRVMKGNRVKKTKAAAHFVPKLLEVAMYREPSLHSVPETSPSSPPAH</sequence>
<reference key="1">
    <citation type="journal article" date="1996" name="Proc. Natl. Acad. Sci. U.S.A.">
        <title>Fibroblast growth factor (FGF) homologous factors: new members of the FGF family implicated in nervous system development.</title>
        <authorList>
            <person name="Smallwood P.M."/>
            <person name="Munoz-Sanjuan I."/>
            <person name="Tong P."/>
            <person name="Macke J.P."/>
            <person name="Hendry S.H."/>
            <person name="Gilbert D.J."/>
            <person name="Copeland N.G."/>
            <person name="Jenkins N.A."/>
            <person name="Nathans J."/>
        </authorList>
    </citation>
    <scope>NUCLEOTIDE SEQUENCE [MRNA]</scope>
    <source>
        <tissue>Eye</tissue>
    </source>
</reference>
<reference key="2">
    <citation type="journal article" date="2009" name="PLoS Biol.">
        <title>Lineage-specific biology revealed by a finished genome assembly of the mouse.</title>
        <authorList>
            <person name="Church D.M."/>
            <person name="Goodstadt L."/>
            <person name="Hillier L.W."/>
            <person name="Zody M.C."/>
            <person name="Goldstein S."/>
            <person name="She X."/>
            <person name="Bult C.J."/>
            <person name="Agarwala R."/>
            <person name="Cherry J.L."/>
            <person name="DiCuccio M."/>
            <person name="Hlavina W."/>
            <person name="Kapustin Y."/>
            <person name="Meric P."/>
            <person name="Maglott D."/>
            <person name="Birtle Z."/>
            <person name="Marques A.C."/>
            <person name="Graves T."/>
            <person name="Zhou S."/>
            <person name="Teague B."/>
            <person name="Potamousis K."/>
            <person name="Churas C."/>
            <person name="Place M."/>
            <person name="Herschleb J."/>
            <person name="Runnheim R."/>
            <person name="Forrest D."/>
            <person name="Amos-Landgraf J."/>
            <person name="Schwartz D.C."/>
            <person name="Cheng Z."/>
            <person name="Lindblad-Toh K."/>
            <person name="Eichler E.E."/>
            <person name="Ponting C.P."/>
        </authorList>
    </citation>
    <scope>NUCLEOTIDE SEQUENCE [LARGE SCALE GENOMIC DNA]</scope>
    <source>
        <strain>C57BL/6J</strain>
    </source>
</reference>
<organism>
    <name type="scientific">Mus musculus</name>
    <name type="common">Mouse</name>
    <dbReference type="NCBI Taxonomy" id="10090"/>
    <lineage>
        <taxon>Eukaryota</taxon>
        <taxon>Metazoa</taxon>
        <taxon>Chordata</taxon>
        <taxon>Craniata</taxon>
        <taxon>Vertebrata</taxon>
        <taxon>Euteleostomi</taxon>
        <taxon>Mammalia</taxon>
        <taxon>Eutheria</taxon>
        <taxon>Euarchontoglires</taxon>
        <taxon>Glires</taxon>
        <taxon>Rodentia</taxon>
        <taxon>Myomorpha</taxon>
        <taxon>Muroidea</taxon>
        <taxon>Muridae</taxon>
        <taxon>Murinae</taxon>
        <taxon>Mus</taxon>
        <taxon>Mus</taxon>
    </lineage>
</organism>
<evidence type="ECO:0000256" key="1">
    <source>
        <dbReference type="SAM" id="MobiDB-lite"/>
    </source>
</evidence>
<evidence type="ECO:0000305" key="2"/>
<keyword id="KW-0339">Growth factor</keyword>
<keyword id="KW-0539">Nucleus</keyword>
<keyword id="KW-1185">Reference proteome</keyword>
<name>FGF11_MOUSE</name>
<accession>P70378</accession>
<accession>Q5F291</accession>